<keyword id="KW-0687">Ribonucleoprotein</keyword>
<keyword id="KW-0689">Ribosomal protein</keyword>
<keyword id="KW-0694">RNA-binding</keyword>
<keyword id="KW-0699">rRNA-binding</keyword>
<name>RL15_CLOPS</name>
<comment type="function">
    <text evidence="1">Binds to the 23S rRNA.</text>
</comment>
<comment type="subunit">
    <text evidence="1">Part of the 50S ribosomal subunit.</text>
</comment>
<comment type="similarity">
    <text evidence="1">Belongs to the universal ribosomal protein uL15 family.</text>
</comment>
<protein>
    <recommendedName>
        <fullName evidence="1">Large ribosomal subunit protein uL15</fullName>
    </recommendedName>
    <alternativeName>
        <fullName evidence="3">50S ribosomal protein L15</fullName>
    </alternativeName>
</protein>
<accession>Q0SQG3</accession>
<organism>
    <name type="scientific">Clostridium perfringens (strain SM101 / Type A)</name>
    <dbReference type="NCBI Taxonomy" id="289380"/>
    <lineage>
        <taxon>Bacteria</taxon>
        <taxon>Bacillati</taxon>
        <taxon>Bacillota</taxon>
        <taxon>Clostridia</taxon>
        <taxon>Eubacteriales</taxon>
        <taxon>Clostridiaceae</taxon>
        <taxon>Clostridium</taxon>
    </lineage>
</organism>
<sequence length="146" mass="15550">MKLHELRPAAGSKSAPKRVGRGTGSGLGRNAGKGEKGQNARSGGGVRPGFEGGQMPLYRRLPKRGFTNPFTKHFVTINVDRLNIFDNGTEVTPELLLERRVVSKLMDGVKILGNGNIEKSLTIAGCKLSKQAAEKIVAAGGKVEVK</sequence>
<gene>
    <name evidence="1" type="primary">rplO</name>
    <name type="ordered locus">CPR_2380</name>
</gene>
<evidence type="ECO:0000255" key="1">
    <source>
        <dbReference type="HAMAP-Rule" id="MF_01341"/>
    </source>
</evidence>
<evidence type="ECO:0000256" key="2">
    <source>
        <dbReference type="SAM" id="MobiDB-lite"/>
    </source>
</evidence>
<evidence type="ECO:0000305" key="3"/>
<feature type="chain" id="PRO_1000054454" description="Large ribosomal subunit protein uL15">
    <location>
        <begin position="1"/>
        <end position="146"/>
    </location>
</feature>
<feature type="region of interest" description="Disordered" evidence="2">
    <location>
        <begin position="1"/>
        <end position="54"/>
    </location>
</feature>
<feature type="compositionally biased region" description="Gly residues" evidence="2">
    <location>
        <begin position="21"/>
        <end position="31"/>
    </location>
</feature>
<feature type="compositionally biased region" description="Gly residues" evidence="2">
    <location>
        <begin position="42"/>
        <end position="52"/>
    </location>
</feature>
<reference key="1">
    <citation type="journal article" date="2006" name="Genome Res.">
        <title>Skewed genomic variability in strains of the toxigenic bacterial pathogen, Clostridium perfringens.</title>
        <authorList>
            <person name="Myers G.S.A."/>
            <person name="Rasko D.A."/>
            <person name="Cheung J.K."/>
            <person name="Ravel J."/>
            <person name="Seshadri R."/>
            <person name="DeBoy R.T."/>
            <person name="Ren Q."/>
            <person name="Varga J."/>
            <person name="Awad M.M."/>
            <person name="Brinkac L.M."/>
            <person name="Daugherty S.C."/>
            <person name="Haft D.H."/>
            <person name="Dodson R.J."/>
            <person name="Madupu R."/>
            <person name="Nelson W.C."/>
            <person name="Rosovitz M.J."/>
            <person name="Sullivan S.A."/>
            <person name="Khouri H."/>
            <person name="Dimitrov G.I."/>
            <person name="Watkins K.L."/>
            <person name="Mulligan S."/>
            <person name="Benton J."/>
            <person name="Radune D."/>
            <person name="Fisher D.J."/>
            <person name="Atkins H.S."/>
            <person name="Hiscox T."/>
            <person name="Jost B.H."/>
            <person name="Billington S.J."/>
            <person name="Songer J.G."/>
            <person name="McClane B.A."/>
            <person name="Titball R.W."/>
            <person name="Rood J.I."/>
            <person name="Melville S.B."/>
            <person name="Paulsen I.T."/>
        </authorList>
    </citation>
    <scope>NUCLEOTIDE SEQUENCE [LARGE SCALE GENOMIC DNA]</scope>
    <source>
        <strain>SM101 / Type A</strain>
    </source>
</reference>
<dbReference type="EMBL" id="CP000312">
    <property type="protein sequence ID" value="ABG86413.1"/>
    <property type="molecule type" value="Genomic_DNA"/>
</dbReference>
<dbReference type="RefSeq" id="WP_003454379.1">
    <property type="nucleotide sequence ID" value="NZ_CAXVKH010000004.1"/>
</dbReference>
<dbReference type="SMR" id="Q0SQG3"/>
<dbReference type="GeneID" id="93001028"/>
<dbReference type="KEGG" id="cpr:CPR_2380"/>
<dbReference type="Proteomes" id="UP000001824">
    <property type="component" value="Chromosome"/>
</dbReference>
<dbReference type="GO" id="GO:0022625">
    <property type="term" value="C:cytosolic large ribosomal subunit"/>
    <property type="evidence" value="ECO:0007669"/>
    <property type="project" value="TreeGrafter"/>
</dbReference>
<dbReference type="GO" id="GO:0019843">
    <property type="term" value="F:rRNA binding"/>
    <property type="evidence" value="ECO:0007669"/>
    <property type="project" value="UniProtKB-UniRule"/>
</dbReference>
<dbReference type="GO" id="GO:0003735">
    <property type="term" value="F:structural constituent of ribosome"/>
    <property type="evidence" value="ECO:0007669"/>
    <property type="project" value="InterPro"/>
</dbReference>
<dbReference type="GO" id="GO:0006412">
    <property type="term" value="P:translation"/>
    <property type="evidence" value="ECO:0007669"/>
    <property type="project" value="UniProtKB-UniRule"/>
</dbReference>
<dbReference type="Gene3D" id="3.100.10.10">
    <property type="match status" value="1"/>
</dbReference>
<dbReference type="HAMAP" id="MF_01341">
    <property type="entry name" value="Ribosomal_uL15"/>
    <property type="match status" value="1"/>
</dbReference>
<dbReference type="InterPro" id="IPR030878">
    <property type="entry name" value="Ribosomal_uL15"/>
</dbReference>
<dbReference type="InterPro" id="IPR021131">
    <property type="entry name" value="Ribosomal_uL15/eL18"/>
</dbReference>
<dbReference type="InterPro" id="IPR036227">
    <property type="entry name" value="Ribosomal_uL15/eL18_sf"/>
</dbReference>
<dbReference type="InterPro" id="IPR005749">
    <property type="entry name" value="Ribosomal_uL15_bac-type"/>
</dbReference>
<dbReference type="InterPro" id="IPR001196">
    <property type="entry name" value="Ribosomal_uL15_CS"/>
</dbReference>
<dbReference type="NCBIfam" id="TIGR01071">
    <property type="entry name" value="rplO_bact"/>
    <property type="match status" value="1"/>
</dbReference>
<dbReference type="PANTHER" id="PTHR12934">
    <property type="entry name" value="50S RIBOSOMAL PROTEIN L15"/>
    <property type="match status" value="1"/>
</dbReference>
<dbReference type="PANTHER" id="PTHR12934:SF11">
    <property type="entry name" value="LARGE RIBOSOMAL SUBUNIT PROTEIN UL15M"/>
    <property type="match status" value="1"/>
</dbReference>
<dbReference type="Pfam" id="PF00828">
    <property type="entry name" value="Ribosomal_L27A"/>
    <property type="match status" value="1"/>
</dbReference>
<dbReference type="SUPFAM" id="SSF52080">
    <property type="entry name" value="Ribosomal proteins L15p and L18e"/>
    <property type="match status" value="1"/>
</dbReference>
<dbReference type="PROSITE" id="PS00475">
    <property type="entry name" value="RIBOSOMAL_L15"/>
    <property type="match status" value="1"/>
</dbReference>
<proteinExistence type="inferred from homology"/>